<name>PPSC_BACSU</name>
<sequence length="2555" mass="287503">MPQQPEIQDIYPLSFMQEGMLFHSLYDEQSRAYFEQASFTIHGQLDLERFQKSMDAVFDRYDIFRTAFIYKNVAKPRQVVLKQRHCPIHIEDISHLNERDKEHCTEAFKEQDKSKGFDLQTDVLMRISILKWAPDHYVCIWSHHHILMDGWCLGIVIKDFLHIYQALGKGQLPDLPPVQPYGTYIKWLMQQDREEAAEYWKKRLQHFEKSTPLPKRTDQIPNGTLQQITFAIPEKETAELQKIAAASGATLNTVFQALWGIMLQKVNRSSDAVFGSVISGRPSELKDVENMVGLFINTIPIRAQSDSLSFSDLVRRMQKDMNEAEAYSYFPLYDIQAQSALKQELIDHIIVFENTPTQQEIEELNQAGSFDFSVKDFEMEEVTNYSCSVKVIPGRTLYVRIHFQTSAYQPSMMSEIKDYLLHMVSDVISDPSLPVSKMTLLDEDKTRKIVSQNNRTVSVSPEAPTLHGLFERQAAVTPERLAIRFSGGSLTYAELDMYASRLAAHLAARGVTNESIVGVLSERSPDMLIAVLAVLKAGGAYLPLDPAYPKERLSYMLKDSGASLLLTQPGCSAPNFSGETLEVDMTSLECEEVKRHVSASVSDGSLAYVIYTSGSTGQPKGVAVEHRQAVSFLTGMQHQFRLSEDDIVMVKTSFSFDASVWQLFWWALSGASAYLLPPGWEKDSALIVQAIHQENVTTAHFIPAMLNSFLDQAEIERLSDRTSLKRVFAGGEPLAPRTAARFASVLPQVSLIHGYGPTEATVDAAFYVLDPERDRDRLRIPIGKPVPGARLYVLDPHLAVQPSGVAGELYIAGAGVARGYLNRPALTEERFLEDPFYLGERMYKTGDVARWLPDGNVEFLGRTDDQVKIRGYRIEPGEIEAALRSIEGVREAAVTVRTDSGEPELCAYVEGLQRNEVRAQLQRLLPGYMVPAYMIEMEQWPVTPSGKLDRNALPAPGGAADAETYTAPRNVTEMKLSQLWEDVLKNGPVGIHDNFFDRGGHSLKATALVSRIAKEFDVQVPLKDVFAHPTVEGLATVIREGTDSPYEAIKPAEKQETYPVSSAQKRIYVLQQLEDGGTGYNMPAVLELEGKLNLERMDRAFKELIKRHESLRTAFEQDAGGDPVQRIHDEVPFTLQTTVLGARTEEEAAAAFIKPFDLSQAPLFRAQIVKVSDERHLLLVDMHHIISDGVSVNILIREFGELYNNRKLPALRIQYKDYAVWQEGFKTGDAYKTQGAYWLKQLEGELPVLDLPADHARPPMRSFAGDKVSFTLDQEVTSGLYKLARENGSTLYMVLLAAYTAFLSRLSGQEDIIVGSPIAGRPHKDLEPILGMFVNTLALRTRPEGGKPFVQYLQEVRETAMEAFEHQDYPFEELVDKLELTRDMSRNPLFDVMFVLQNMDQESLELDELCLKPAANNGHQTSKFDLTLYAQEQPRGLLTFQMEFSTDLYKKKTIEKWLQYFNNMLLSIIKDNKAALGTINILNEDEAHYLIHELNRTKIDYPRNETISRLFEMQAEQTPNAVAIVSDTQVFTYEDLNSWANQIASVLQIKGVGPDSVVALLTGRTPELIAGMLGILKAGGAYLPIDSNLPVERIAYMLSDSRAALLLQSEKTEKRLLGIECEQIIIEDIQKQGEAKNVESSAGPHSLAYIIYTSGSTGKPKGVMIEQRSVIRLVKNSNYITFTPEDRLLMTSSIGFDVGSFEIFGPLLNGAALHLSDQQTFLDSHQLKRYIEHQGITTIWLTSSLFNHLTEQNEQTFSQLKHLIIGGEALSPSHVNRIRNVCPEVSIWNGYGPTENTTFSTCLHIQKTYELSIPIGRPVGNSTAFILNQWGVLQPVGAVGELCVGGDGVARGYLGRPDLTKEKFVPHPFAPGDRLYRTGDLARWLSDGTIEYVGRIDDQVKVRGYRVELGEIETALRQIDGVKEAAVLARTAQTGSKELFGYISVKAGTNAEQVRSLLARSLPNYMIPAYIIEMETLPLTSNGKLNRKALPEPDVASKQTYIPPRNELEEQLALIWQEVLGIQRIGIEDSFFELGGDSIKALQVSARLGRYGLSLQVSDLFRHPKIKDLSPFIRKSERIIEQGPIQGDVPWTPVQQWFFSQDIEERHHFNQSVMLFHSGRLSENALRPALKKLAEHHDALRMVYRNDDRRWIQINQGIHESQLYSLRISDLSQSESGWETKIKQEVADLQQSINLQEGPLLHAALFKTLTGDYLFLAIHHLVVDGVSWRILLEDLSAGYQQAAAGQTIQLPPKTDSYQEYARRIQEYAQSSKLIREEAYWRSVEEQQAAELPYEIPHHVNIDFSKRDSLSFSLTEADTAVLLQNVNHAYGTDTQDILLTAASLAICEWTGGSKLRIAMEGHGREHILPELDISRTVGWFTSMYPALISFENHRDELGTSVKTVKDTLGRIPNKGVGYGMLKYLTHPENKSITFSKTPEISFNYLGQFNDIERQDTFRPSSLGSGKDITHTWKREQIIEMSAMAADKKLHFNLSYPPARFHRNTMEQLINRIEHFLLDIMKHCAGQQKAEKTLSDFSSQSLTAEDLDSISSLVEEL</sequence>
<evidence type="ECO:0000255" key="1">
    <source>
        <dbReference type="PROSITE-ProRule" id="PRU00258"/>
    </source>
</evidence>
<evidence type="ECO:0000269" key="2">
    <source>
    </source>
</evidence>
<evidence type="ECO:0000305" key="3"/>
<reference key="1">
    <citation type="journal article" date="1997" name="Nature">
        <title>The complete genome sequence of the Gram-positive bacterium Bacillus subtilis.</title>
        <authorList>
            <person name="Kunst F."/>
            <person name="Ogasawara N."/>
            <person name="Moszer I."/>
            <person name="Albertini A.M."/>
            <person name="Alloni G."/>
            <person name="Azevedo V."/>
            <person name="Bertero M.G."/>
            <person name="Bessieres P."/>
            <person name="Bolotin A."/>
            <person name="Borchert S."/>
            <person name="Borriss R."/>
            <person name="Boursier L."/>
            <person name="Brans A."/>
            <person name="Braun M."/>
            <person name="Brignell S.C."/>
            <person name="Bron S."/>
            <person name="Brouillet S."/>
            <person name="Bruschi C.V."/>
            <person name="Caldwell B."/>
            <person name="Capuano V."/>
            <person name="Carter N.M."/>
            <person name="Choi S.-K."/>
            <person name="Codani J.-J."/>
            <person name="Connerton I.F."/>
            <person name="Cummings N.J."/>
            <person name="Daniel R.A."/>
            <person name="Denizot F."/>
            <person name="Devine K.M."/>
            <person name="Duesterhoeft A."/>
            <person name="Ehrlich S.D."/>
            <person name="Emmerson P.T."/>
            <person name="Entian K.-D."/>
            <person name="Errington J."/>
            <person name="Fabret C."/>
            <person name="Ferrari E."/>
            <person name="Foulger D."/>
            <person name="Fritz C."/>
            <person name="Fujita M."/>
            <person name="Fujita Y."/>
            <person name="Fuma S."/>
            <person name="Galizzi A."/>
            <person name="Galleron N."/>
            <person name="Ghim S.-Y."/>
            <person name="Glaser P."/>
            <person name="Goffeau A."/>
            <person name="Golightly E.J."/>
            <person name="Grandi G."/>
            <person name="Guiseppi G."/>
            <person name="Guy B.J."/>
            <person name="Haga K."/>
            <person name="Haiech J."/>
            <person name="Harwood C.R."/>
            <person name="Henaut A."/>
            <person name="Hilbert H."/>
            <person name="Holsappel S."/>
            <person name="Hosono S."/>
            <person name="Hullo M.-F."/>
            <person name="Itaya M."/>
            <person name="Jones L.-M."/>
            <person name="Joris B."/>
            <person name="Karamata D."/>
            <person name="Kasahara Y."/>
            <person name="Klaerr-Blanchard M."/>
            <person name="Klein C."/>
            <person name="Kobayashi Y."/>
            <person name="Koetter P."/>
            <person name="Koningstein G."/>
            <person name="Krogh S."/>
            <person name="Kumano M."/>
            <person name="Kurita K."/>
            <person name="Lapidus A."/>
            <person name="Lardinois S."/>
            <person name="Lauber J."/>
            <person name="Lazarevic V."/>
            <person name="Lee S.-M."/>
            <person name="Levine A."/>
            <person name="Liu H."/>
            <person name="Masuda S."/>
            <person name="Mauel C."/>
            <person name="Medigue C."/>
            <person name="Medina N."/>
            <person name="Mellado R.P."/>
            <person name="Mizuno M."/>
            <person name="Moestl D."/>
            <person name="Nakai S."/>
            <person name="Noback M."/>
            <person name="Noone D."/>
            <person name="O'Reilly M."/>
            <person name="Ogawa K."/>
            <person name="Ogiwara A."/>
            <person name="Oudega B."/>
            <person name="Park S.-H."/>
            <person name="Parro V."/>
            <person name="Pohl T.M."/>
            <person name="Portetelle D."/>
            <person name="Porwollik S."/>
            <person name="Prescott A.M."/>
            <person name="Presecan E."/>
            <person name="Pujic P."/>
            <person name="Purnelle B."/>
            <person name="Rapoport G."/>
            <person name="Rey M."/>
            <person name="Reynolds S."/>
            <person name="Rieger M."/>
            <person name="Rivolta C."/>
            <person name="Rocha E."/>
            <person name="Roche B."/>
            <person name="Rose M."/>
            <person name="Sadaie Y."/>
            <person name="Sato T."/>
            <person name="Scanlan E."/>
            <person name="Schleich S."/>
            <person name="Schroeter R."/>
            <person name="Scoffone F."/>
            <person name="Sekiguchi J."/>
            <person name="Sekowska A."/>
            <person name="Seror S.J."/>
            <person name="Serror P."/>
            <person name="Shin B.-S."/>
            <person name="Soldo B."/>
            <person name="Sorokin A."/>
            <person name="Tacconi E."/>
            <person name="Takagi T."/>
            <person name="Takahashi H."/>
            <person name="Takemaru K."/>
            <person name="Takeuchi M."/>
            <person name="Tamakoshi A."/>
            <person name="Tanaka T."/>
            <person name="Terpstra P."/>
            <person name="Tognoni A."/>
            <person name="Tosato V."/>
            <person name="Uchiyama S."/>
            <person name="Vandenbol M."/>
            <person name="Vannier F."/>
            <person name="Vassarotti A."/>
            <person name="Viari A."/>
            <person name="Wambutt R."/>
            <person name="Wedler E."/>
            <person name="Wedler H."/>
            <person name="Weitzenegger T."/>
            <person name="Winters P."/>
            <person name="Wipat A."/>
            <person name="Yamamoto H."/>
            <person name="Yamane K."/>
            <person name="Yasumoto K."/>
            <person name="Yata K."/>
            <person name="Yoshida K."/>
            <person name="Yoshikawa H.-F."/>
            <person name="Zumstein E."/>
            <person name="Yoshikawa H."/>
            <person name="Danchin A."/>
        </authorList>
    </citation>
    <scope>NUCLEOTIDE SEQUENCE [LARGE SCALE GENOMIC DNA]</scope>
    <source>
        <strain>168</strain>
    </source>
</reference>
<reference key="2">
    <citation type="journal article" date="1995" name="Microbiology">
        <title>A putative new peptide synthase operon in Bacillus subtilis: partial characterization.</title>
        <authorList>
            <person name="Tognoni A."/>
            <person name="Franchi E."/>
            <person name="Magistrelli C."/>
            <person name="Colombo E."/>
            <person name="Cosmina P."/>
            <person name="Grandi G."/>
        </authorList>
    </citation>
    <scope>NUCLEOTIDE SEQUENCE [GENOMIC DNA] OF 1-859</scope>
    <source>
        <strain>168</strain>
    </source>
</reference>
<reference key="3">
    <citation type="journal article" date="1999" name="Antimicrob. Agents Chemother.">
        <title>The genes degQ, pps, and lpa-8 (sfp) are responsible for conversion of Bacillus subtilis 168 to plipastatin production.</title>
        <authorList>
            <person name="Tsuge K."/>
            <person name="Ano T."/>
            <person name="Hirai M."/>
            <person name="Nakamura Y."/>
            <person name="Shoda M."/>
        </authorList>
    </citation>
    <scope>FUNCTION IN PLIPASTATIN BIOSYNTHESIS</scope>
</reference>
<proteinExistence type="evidence at protein level"/>
<organism>
    <name type="scientific">Bacillus subtilis (strain 168)</name>
    <dbReference type="NCBI Taxonomy" id="224308"/>
    <lineage>
        <taxon>Bacteria</taxon>
        <taxon>Bacillati</taxon>
        <taxon>Bacillota</taxon>
        <taxon>Bacilli</taxon>
        <taxon>Bacillales</taxon>
        <taxon>Bacillaceae</taxon>
        <taxon>Bacillus</taxon>
    </lineage>
</organism>
<dbReference type="EC" id="2.3.1.-"/>
<dbReference type="EMBL" id="AL009126">
    <property type="protein sequence ID" value="CAB13715.1"/>
    <property type="molecule type" value="Genomic_DNA"/>
</dbReference>
<dbReference type="EMBL" id="Z34883">
    <property type="protein sequence ID" value="CAA84362.1"/>
    <property type="molecule type" value="Genomic_DNA"/>
</dbReference>
<dbReference type="PIR" id="C69681">
    <property type="entry name" value="C69681"/>
</dbReference>
<dbReference type="RefSeq" id="NP_389714.1">
    <property type="nucleotide sequence ID" value="NC_000964.3"/>
</dbReference>
<dbReference type="RefSeq" id="WP_009967356.1">
    <property type="nucleotide sequence ID" value="NZ_OZ025638.1"/>
</dbReference>
<dbReference type="SMR" id="P39847"/>
<dbReference type="FunCoup" id="P39847">
    <property type="interactions" value="19"/>
</dbReference>
<dbReference type="IntAct" id="P39847">
    <property type="interactions" value="16"/>
</dbReference>
<dbReference type="STRING" id="224308.BSU18320"/>
<dbReference type="PaxDb" id="224308-BSU18320"/>
<dbReference type="EnsemblBacteria" id="CAB13715">
    <property type="protein sequence ID" value="CAB13715"/>
    <property type="gene ID" value="BSU_18320"/>
</dbReference>
<dbReference type="GeneID" id="940102"/>
<dbReference type="KEGG" id="bsu:BSU18320"/>
<dbReference type="PATRIC" id="fig|224308.179.peg.1999"/>
<dbReference type="eggNOG" id="COG1020">
    <property type="taxonomic scope" value="Bacteria"/>
</dbReference>
<dbReference type="InParanoid" id="P39847"/>
<dbReference type="OrthoDB" id="9765680at2"/>
<dbReference type="BioCyc" id="BSUB:BSU18320-MONOMER"/>
<dbReference type="Proteomes" id="UP000001570">
    <property type="component" value="Chromosome"/>
</dbReference>
<dbReference type="GO" id="GO:0005737">
    <property type="term" value="C:cytoplasm"/>
    <property type="evidence" value="ECO:0000318"/>
    <property type="project" value="GO_Central"/>
</dbReference>
<dbReference type="GO" id="GO:0005829">
    <property type="term" value="C:cytosol"/>
    <property type="evidence" value="ECO:0000318"/>
    <property type="project" value="GO_Central"/>
</dbReference>
<dbReference type="GO" id="GO:0016874">
    <property type="term" value="F:ligase activity"/>
    <property type="evidence" value="ECO:0007669"/>
    <property type="project" value="UniProtKB-KW"/>
</dbReference>
<dbReference type="GO" id="GO:0031177">
    <property type="term" value="F:phosphopantetheine binding"/>
    <property type="evidence" value="ECO:0000318"/>
    <property type="project" value="GO_Central"/>
</dbReference>
<dbReference type="GO" id="GO:0016740">
    <property type="term" value="F:transferase activity"/>
    <property type="evidence" value="ECO:0007669"/>
    <property type="project" value="UniProtKB-KW"/>
</dbReference>
<dbReference type="GO" id="GO:0043041">
    <property type="term" value="P:amino acid activation for nonribosomal peptide biosynthetic process"/>
    <property type="evidence" value="ECO:0000318"/>
    <property type="project" value="GO_Central"/>
</dbReference>
<dbReference type="GO" id="GO:0017000">
    <property type="term" value="P:antibiotic biosynthetic process"/>
    <property type="evidence" value="ECO:0007669"/>
    <property type="project" value="UniProtKB-KW"/>
</dbReference>
<dbReference type="GO" id="GO:0008610">
    <property type="term" value="P:lipid biosynthetic process"/>
    <property type="evidence" value="ECO:0007669"/>
    <property type="project" value="UniProtKB-ARBA"/>
</dbReference>
<dbReference type="GO" id="GO:0044550">
    <property type="term" value="P:secondary metabolite biosynthetic process"/>
    <property type="evidence" value="ECO:0000318"/>
    <property type="project" value="GO_Central"/>
</dbReference>
<dbReference type="CDD" id="cd05930">
    <property type="entry name" value="A_NRPS"/>
    <property type="match status" value="1"/>
</dbReference>
<dbReference type="CDD" id="cd12117">
    <property type="entry name" value="A_NRPS_Srf_like"/>
    <property type="match status" value="1"/>
</dbReference>
<dbReference type="CDD" id="cd19543">
    <property type="entry name" value="DCL_NRPS"/>
    <property type="match status" value="1"/>
</dbReference>
<dbReference type="CDD" id="cd19534">
    <property type="entry name" value="E_NRPS"/>
    <property type="match status" value="1"/>
</dbReference>
<dbReference type="CDD" id="cd19531">
    <property type="entry name" value="LCL_NRPS-like"/>
    <property type="match status" value="1"/>
</dbReference>
<dbReference type="FunFam" id="3.30.300.30:FF:000010">
    <property type="entry name" value="Enterobactin synthetase component F"/>
    <property type="match status" value="2"/>
</dbReference>
<dbReference type="FunFam" id="3.40.50.980:FF:000002">
    <property type="entry name" value="Enterobactin synthetase component F"/>
    <property type="match status" value="2"/>
</dbReference>
<dbReference type="FunFam" id="3.30.559.10:FF:000012">
    <property type="entry name" value="Non-ribosomal peptide synthetase"/>
    <property type="match status" value="2"/>
</dbReference>
<dbReference type="FunFam" id="3.40.50.12780:FF:000012">
    <property type="entry name" value="Non-ribosomal peptide synthetase"/>
    <property type="match status" value="2"/>
</dbReference>
<dbReference type="FunFam" id="3.40.50.980:FF:000001">
    <property type="entry name" value="Non-ribosomal peptide synthetase"/>
    <property type="match status" value="2"/>
</dbReference>
<dbReference type="FunFam" id="2.30.38.10:FF:000001">
    <property type="entry name" value="Non-ribosomal peptide synthetase PvdI"/>
    <property type="match status" value="2"/>
</dbReference>
<dbReference type="FunFam" id="3.30.559.10:FF:000016">
    <property type="entry name" value="Nonribosomal peptide synthase Pes1"/>
    <property type="match status" value="1"/>
</dbReference>
<dbReference type="FunFam" id="1.10.1200.10:FF:000005">
    <property type="entry name" value="Nonribosomal peptide synthetase 1"/>
    <property type="match status" value="2"/>
</dbReference>
<dbReference type="FunFam" id="3.40.50.1820:FF:000818">
    <property type="entry name" value="Plipastatin synthase subunit C"/>
    <property type="match status" value="1"/>
</dbReference>
<dbReference type="Gene3D" id="3.30.300.30">
    <property type="match status" value="2"/>
</dbReference>
<dbReference type="Gene3D" id="3.40.50.980">
    <property type="match status" value="4"/>
</dbReference>
<dbReference type="Gene3D" id="1.10.1200.10">
    <property type="entry name" value="ACP-like"/>
    <property type="match status" value="1"/>
</dbReference>
<dbReference type="Gene3D" id="3.40.50.1820">
    <property type="entry name" value="alpha/beta hydrolase"/>
    <property type="match status" value="1"/>
</dbReference>
<dbReference type="Gene3D" id="3.30.559.10">
    <property type="entry name" value="Chloramphenicol acetyltransferase-like domain"/>
    <property type="match status" value="3"/>
</dbReference>
<dbReference type="Gene3D" id="2.30.38.10">
    <property type="entry name" value="Luciferase, Domain 3"/>
    <property type="match status" value="2"/>
</dbReference>
<dbReference type="Gene3D" id="3.30.559.30">
    <property type="entry name" value="Nonribosomal peptide synthetase, condensation domain"/>
    <property type="match status" value="3"/>
</dbReference>
<dbReference type="InterPro" id="IPR010071">
    <property type="entry name" value="AA_adenyl_dom"/>
</dbReference>
<dbReference type="InterPro" id="IPR029058">
    <property type="entry name" value="AB_hydrolase_fold"/>
</dbReference>
<dbReference type="InterPro" id="IPR036736">
    <property type="entry name" value="ACP-like_sf"/>
</dbReference>
<dbReference type="InterPro" id="IPR025110">
    <property type="entry name" value="AMP-bd_C"/>
</dbReference>
<dbReference type="InterPro" id="IPR045851">
    <property type="entry name" value="AMP-bd_C_sf"/>
</dbReference>
<dbReference type="InterPro" id="IPR020845">
    <property type="entry name" value="AMP-binding_CS"/>
</dbReference>
<dbReference type="InterPro" id="IPR000873">
    <property type="entry name" value="AMP-dep_synth/lig_dom"/>
</dbReference>
<dbReference type="InterPro" id="IPR023213">
    <property type="entry name" value="CAT-like_dom_sf"/>
</dbReference>
<dbReference type="InterPro" id="IPR001242">
    <property type="entry name" value="Condensatn"/>
</dbReference>
<dbReference type="InterPro" id="IPR010060">
    <property type="entry name" value="NRPS_synth"/>
</dbReference>
<dbReference type="InterPro" id="IPR020806">
    <property type="entry name" value="PKS_PP-bd"/>
</dbReference>
<dbReference type="InterPro" id="IPR009081">
    <property type="entry name" value="PP-bd_ACP"/>
</dbReference>
<dbReference type="InterPro" id="IPR006162">
    <property type="entry name" value="Ppantetheine_attach_site"/>
</dbReference>
<dbReference type="NCBIfam" id="TIGR01733">
    <property type="entry name" value="AA-adenyl-dom"/>
    <property type="match status" value="2"/>
</dbReference>
<dbReference type="NCBIfam" id="TIGR01720">
    <property type="entry name" value="NRPS-para261"/>
    <property type="match status" value="1"/>
</dbReference>
<dbReference type="NCBIfam" id="NF003417">
    <property type="entry name" value="PRK04813.1"/>
    <property type="match status" value="2"/>
</dbReference>
<dbReference type="PANTHER" id="PTHR45527:SF1">
    <property type="entry name" value="FATTY ACID SYNTHASE"/>
    <property type="match status" value="1"/>
</dbReference>
<dbReference type="PANTHER" id="PTHR45527">
    <property type="entry name" value="NONRIBOSOMAL PEPTIDE SYNTHETASE"/>
    <property type="match status" value="1"/>
</dbReference>
<dbReference type="Pfam" id="PF00501">
    <property type="entry name" value="AMP-binding"/>
    <property type="match status" value="2"/>
</dbReference>
<dbReference type="Pfam" id="PF13193">
    <property type="entry name" value="AMP-binding_C"/>
    <property type="match status" value="2"/>
</dbReference>
<dbReference type="Pfam" id="PF00668">
    <property type="entry name" value="Condensation"/>
    <property type="match status" value="3"/>
</dbReference>
<dbReference type="Pfam" id="PF00550">
    <property type="entry name" value="PP-binding"/>
    <property type="match status" value="2"/>
</dbReference>
<dbReference type="SMART" id="SM00823">
    <property type="entry name" value="PKS_PP"/>
    <property type="match status" value="2"/>
</dbReference>
<dbReference type="SMART" id="SM01294">
    <property type="entry name" value="PKS_PP_betabranch"/>
    <property type="match status" value="1"/>
</dbReference>
<dbReference type="SUPFAM" id="SSF56801">
    <property type="entry name" value="Acetyl-CoA synthetase-like"/>
    <property type="match status" value="2"/>
</dbReference>
<dbReference type="SUPFAM" id="SSF47336">
    <property type="entry name" value="ACP-like"/>
    <property type="match status" value="2"/>
</dbReference>
<dbReference type="SUPFAM" id="SSF52777">
    <property type="entry name" value="CoA-dependent acyltransferases"/>
    <property type="match status" value="6"/>
</dbReference>
<dbReference type="PROSITE" id="PS00455">
    <property type="entry name" value="AMP_BINDING"/>
    <property type="match status" value="2"/>
</dbReference>
<dbReference type="PROSITE" id="PS50075">
    <property type="entry name" value="CARRIER"/>
    <property type="match status" value="2"/>
</dbReference>
<dbReference type="PROSITE" id="PS00012">
    <property type="entry name" value="PHOSPHOPANTETHEINE"/>
    <property type="match status" value="1"/>
</dbReference>
<keyword id="KW-0045">Antibiotic biosynthesis</keyword>
<keyword id="KW-0436">Ligase</keyword>
<keyword id="KW-0511">Multifunctional enzyme</keyword>
<keyword id="KW-0596">Phosphopantetheine</keyword>
<keyword id="KW-0597">Phosphoprotein</keyword>
<keyword id="KW-1185">Reference proteome</keyword>
<keyword id="KW-0677">Repeat</keyword>
<keyword id="KW-0808">Transferase</keyword>
<feature type="chain" id="PRO_0000193187" description="Plipastatin synthase subunit C">
    <location>
        <begin position="1"/>
        <end position="2555"/>
    </location>
</feature>
<feature type="domain" description="Carrier 1" evidence="1">
    <location>
        <begin position="967"/>
        <end position="1042"/>
    </location>
</feature>
<feature type="domain" description="Carrier 2" evidence="1">
    <location>
        <begin position="2003"/>
        <end position="2077"/>
    </location>
</feature>
<feature type="region of interest" description="Condensation 1">
    <location>
        <begin position="7"/>
        <end position="306"/>
    </location>
</feature>
<feature type="region of interest" description="Adenylation 1">
    <location>
        <begin position="491"/>
        <end position="894"/>
    </location>
</feature>
<feature type="region of interest" description="Condensation 2">
    <location>
        <begin position="1054"/>
        <end position="1344"/>
    </location>
</feature>
<feature type="region of interest" description="Adenylation 2">
    <location>
        <begin position="1532"/>
        <end position="1927"/>
    </location>
</feature>
<feature type="region of interest" description="Epimerization 3">
    <location>
        <begin position="2085"/>
        <end position="2548"/>
    </location>
</feature>
<feature type="modified residue" description="O-(pantetheine 4'-phosphoryl)serine" evidence="1">
    <location>
        <position position="1002"/>
    </location>
</feature>
<feature type="modified residue" description="O-(pantetheine 4'-phosphoryl)serine" evidence="1">
    <location>
        <position position="2038"/>
    </location>
</feature>
<gene>
    <name type="primary">ppsC</name>
    <name type="synonym">pps3</name>
    <name type="ordered locus">BSU18320</name>
</gene>
<protein>
    <recommendedName>
        <fullName>Plipastatin synthase subunit C</fullName>
        <ecNumber>2.3.1.-</ecNumber>
    </recommendedName>
    <alternativeName>
        <fullName>Peptide synthase 3</fullName>
    </alternativeName>
    <domain>
        <recommendedName>
            <fullName>ATP-dependent glutamate adenylase 2</fullName>
            <shortName>GluA 2</shortName>
        </recommendedName>
        <alternativeName>
            <fullName>Glutamate activase 2</fullName>
        </alternativeName>
    </domain>
    <domain>
        <recommendedName>
            <fullName>ATP-dependent alanine/valine adenylase</fullName>
            <shortName>Ala/ValA</shortName>
        </recommendedName>
        <alternativeName>
            <fullName>Alanine/valine activase</fullName>
        </alternativeName>
    </domain>
</protein>
<comment type="function">
    <text evidence="2">This protein is a multifunctional enzyme, able to activate and polymerize the amino acids Glu and Ala/Val as part of the biosynthesis of the lipopeptide antibiotic plipastatin. The Ala/Val residue is further epimerized to the D-isomer form. The activation sites for these amino acids consist of individual domains.</text>
</comment>
<comment type="cofactor">
    <cofactor evidence="3">
        <name>pantetheine 4'-phosphate</name>
        <dbReference type="ChEBI" id="CHEBI:47942"/>
    </cofactor>
    <text evidence="3">Binds 2 phosphopantetheines covalently.</text>
</comment>
<comment type="similarity">
    <text evidence="3">Belongs to the ATP-dependent AMP-binding enzyme family.</text>
</comment>
<accession>P39847</accession>